<evidence type="ECO:0000255" key="1">
    <source>
        <dbReference type="HAMAP-Rule" id="MF_00365"/>
    </source>
</evidence>
<protein>
    <recommendedName>
        <fullName evidence="1">DNA replication and repair protein RecF</fullName>
    </recommendedName>
</protein>
<organism>
    <name type="scientific">Shewanella halifaxensis (strain HAW-EB4)</name>
    <dbReference type="NCBI Taxonomy" id="458817"/>
    <lineage>
        <taxon>Bacteria</taxon>
        <taxon>Pseudomonadati</taxon>
        <taxon>Pseudomonadota</taxon>
        <taxon>Gammaproteobacteria</taxon>
        <taxon>Alteromonadales</taxon>
        <taxon>Shewanellaceae</taxon>
        <taxon>Shewanella</taxon>
    </lineage>
</organism>
<sequence>MSLTRLHIETFRNISLAQLDPGDGLNLIYGQNGSGKTSILEAIYFLGMGRSFRSHLSQRVIQHNDDKLTLFANLSVCEQESKIGLRRFRNGETEVKINGDNIKRLSTLAETLPIQVITPESFSLLFEGPKSRRQFIDWGAFHSDKSFHLAWANVRRILKQRNQLLKNQVSYSQIQYWDKELVRYSEQVTEIRKQYVDSLNEQLKGIIGEFLPLVEVKVSFTRGWDSKTDFGQLLETQYLRDVAAGNTGSGPHKADLRLRVGVLPVQDALSRGQLKLLVCALRIAQGKLLKQQTDKNSIYLVDDLPSELDAQHRKLLLQQLMDTGAQVFVTAIEPAAIVDSLATPPSKMFHVEQGCVTVIDKPTRE</sequence>
<proteinExistence type="inferred from homology"/>
<reference key="1">
    <citation type="submission" date="2008-01" db="EMBL/GenBank/DDBJ databases">
        <title>Complete sequence of Shewanella halifaxensis HAW-EB4.</title>
        <authorList>
            <consortium name="US DOE Joint Genome Institute"/>
            <person name="Copeland A."/>
            <person name="Lucas S."/>
            <person name="Lapidus A."/>
            <person name="Glavina del Rio T."/>
            <person name="Dalin E."/>
            <person name="Tice H."/>
            <person name="Bruce D."/>
            <person name="Goodwin L."/>
            <person name="Pitluck S."/>
            <person name="Sims D."/>
            <person name="Brettin T."/>
            <person name="Detter J.C."/>
            <person name="Han C."/>
            <person name="Kuske C.R."/>
            <person name="Schmutz J."/>
            <person name="Larimer F."/>
            <person name="Land M."/>
            <person name="Hauser L."/>
            <person name="Kyrpides N."/>
            <person name="Kim E."/>
            <person name="Zhao J.-S."/>
            <person name="Richardson P."/>
        </authorList>
    </citation>
    <scope>NUCLEOTIDE SEQUENCE [LARGE SCALE GENOMIC DNA]</scope>
    <source>
        <strain>HAW-EB4</strain>
    </source>
</reference>
<name>RECF_SHEHH</name>
<keyword id="KW-0067">ATP-binding</keyword>
<keyword id="KW-0963">Cytoplasm</keyword>
<keyword id="KW-0227">DNA damage</keyword>
<keyword id="KW-0234">DNA repair</keyword>
<keyword id="KW-0235">DNA replication</keyword>
<keyword id="KW-0238">DNA-binding</keyword>
<keyword id="KW-0547">Nucleotide-binding</keyword>
<keyword id="KW-0742">SOS response</keyword>
<feature type="chain" id="PRO_1000079605" description="DNA replication and repair protein RecF">
    <location>
        <begin position="1"/>
        <end position="365"/>
    </location>
</feature>
<feature type="binding site" evidence="1">
    <location>
        <begin position="30"/>
        <end position="37"/>
    </location>
    <ligand>
        <name>ATP</name>
        <dbReference type="ChEBI" id="CHEBI:30616"/>
    </ligand>
</feature>
<dbReference type="EMBL" id="CP000931">
    <property type="protein sequence ID" value="ABZ74579.1"/>
    <property type="molecule type" value="Genomic_DNA"/>
</dbReference>
<dbReference type="RefSeq" id="WP_012275137.1">
    <property type="nucleotide sequence ID" value="NC_010334.1"/>
</dbReference>
<dbReference type="SMR" id="B0TLA6"/>
<dbReference type="STRING" id="458817.Shal_0003"/>
<dbReference type="KEGG" id="shl:Shal_0003"/>
<dbReference type="eggNOG" id="COG1195">
    <property type="taxonomic scope" value="Bacteria"/>
</dbReference>
<dbReference type="HOGENOM" id="CLU_040267_0_0_6"/>
<dbReference type="OrthoDB" id="9803889at2"/>
<dbReference type="Proteomes" id="UP000001317">
    <property type="component" value="Chromosome"/>
</dbReference>
<dbReference type="GO" id="GO:0005737">
    <property type="term" value="C:cytoplasm"/>
    <property type="evidence" value="ECO:0007669"/>
    <property type="project" value="UniProtKB-SubCell"/>
</dbReference>
<dbReference type="GO" id="GO:0005524">
    <property type="term" value="F:ATP binding"/>
    <property type="evidence" value="ECO:0007669"/>
    <property type="project" value="UniProtKB-UniRule"/>
</dbReference>
<dbReference type="GO" id="GO:0003697">
    <property type="term" value="F:single-stranded DNA binding"/>
    <property type="evidence" value="ECO:0007669"/>
    <property type="project" value="UniProtKB-UniRule"/>
</dbReference>
<dbReference type="GO" id="GO:0006260">
    <property type="term" value="P:DNA replication"/>
    <property type="evidence" value="ECO:0007669"/>
    <property type="project" value="UniProtKB-UniRule"/>
</dbReference>
<dbReference type="GO" id="GO:0000731">
    <property type="term" value="P:DNA synthesis involved in DNA repair"/>
    <property type="evidence" value="ECO:0007669"/>
    <property type="project" value="TreeGrafter"/>
</dbReference>
<dbReference type="GO" id="GO:0006302">
    <property type="term" value="P:double-strand break repair"/>
    <property type="evidence" value="ECO:0007669"/>
    <property type="project" value="TreeGrafter"/>
</dbReference>
<dbReference type="GO" id="GO:0009432">
    <property type="term" value="P:SOS response"/>
    <property type="evidence" value="ECO:0007669"/>
    <property type="project" value="UniProtKB-UniRule"/>
</dbReference>
<dbReference type="Gene3D" id="3.40.50.300">
    <property type="entry name" value="P-loop containing nucleotide triphosphate hydrolases"/>
    <property type="match status" value="1"/>
</dbReference>
<dbReference type="Gene3D" id="1.20.1050.90">
    <property type="entry name" value="RecF/RecN/SMC, N-terminal domain"/>
    <property type="match status" value="1"/>
</dbReference>
<dbReference type="HAMAP" id="MF_00365">
    <property type="entry name" value="RecF"/>
    <property type="match status" value="1"/>
</dbReference>
<dbReference type="InterPro" id="IPR001238">
    <property type="entry name" value="DNA-binding_RecF"/>
</dbReference>
<dbReference type="InterPro" id="IPR018078">
    <property type="entry name" value="DNA-binding_RecF_CS"/>
</dbReference>
<dbReference type="InterPro" id="IPR027417">
    <property type="entry name" value="P-loop_NTPase"/>
</dbReference>
<dbReference type="InterPro" id="IPR003395">
    <property type="entry name" value="RecF/RecN/SMC_N"/>
</dbReference>
<dbReference type="InterPro" id="IPR042174">
    <property type="entry name" value="RecF_2"/>
</dbReference>
<dbReference type="NCBIfam" id="TIGR00611">
    <property type="entry name" value="recf"/>
    <property type="match status" value="1"/>
</dbReference>
<dbReference type="PANTHER" id="PTHR32182">
    <property type="entry name" value="DNA REPLICATION AND REPAIR PROTEIN RECF"/>
    <property type="match status" value="1"/>
</dbReference>
<dbReference type="PANTHER" id="PTHR32182:SF0">
    <property type="entry name" value="DNA REPLICATION AND REPAIR PROTEIN RECF"/>
    <property type="match status" value="1"/>
</dbReference>
<dbReference type="Pfam" id="PF02463">
    <property type="entry name" value="SMC_N"/>
    <property type="match status" value="1"/>
</dbReference>
<dbReference type="SUPFAM" id="SSF52540">
    <property type="entry name" value="P-loop containing nucleoside triphosphate hydrolases"/>
    <property type="match status" value="1"/>
</dbReference>
<dbReference type="PROSITE" id="PS00617">
    <property type="entry name" value="RECF_1"/>
    <property type="match status" value="1"/>
</dbReference>
<dbReference type="PROSITE" id="PS00618">
    <property type="entry name" value="RECF_2"/>
    <property type="match status" value="1"/>
</dbReference>
<accession>B0TLA6</accession>
<comment type="function">
    <text evidence="1">The RecF protein is involved in DNA metabolism; it is required for DNA replication and normal SOS inducibility. RecF binds preferentially to single-stranded, linear DNA. It also seems to bind ATP.</text>
</comment>
<comment type="subcellular location">
    <subcellularLocation>
        <location evidence="1">Cytoplasm</location>
    </subcellularLocation>
</comment>
<comment type="similarity">
    <text evidence="1">Belongs to the RecF family.</text>
</comment>
<gene>
    <name evidence="1" type="primary">recF</name>
    <name type="ordered locus">Shal_0003</name>
</gene>